<evidence type="ECO:0000250" key="1">
    <source>
        <dbReference type="UniProtKB" id="P16636"/>
    </source>
</evidence>
<evidence type="ECO:0000250" key="2">
    <source>
        <dbReference type="UniProtKB" id="P28300"/>
    </source>
</evidence>
<evidence type="ECO:0000250" key="3">
    <source>
        <dbReference type="UniProtKB" id="P28301"/>
    </source>
</evidence>
<evidence type="ECO:0000250" key="4">
    <source>
        <dbReference type="UniProtKB" id="P33072"/>
    </source>
</evidence>
<evidence type="ECO:0000255" key="5"/>
<evidence type="ECO:0000256" key="6">
    <source>
        <dbReference type="SAM" id="MobiDB-lite"/>
    </source>
</evidence>
<evidence type="ECO:0000269" key="7">
    <source>
    </source>
</evidence>
<evidence type="ECO:0000305" key="8"/>
<dbReference type="EC" id="1.4.3.13" evidence="7"/>
<dbReference type="EMBL" id="M97881">
    <property type="protein sequence ID" value="AAA48942.1"/>
    <property type="molecule type" value="mRNA"/>
</dbReference>
<dbReference type="PIR" id="A45166">
    <property type="entry name" value="A45166"/>
</dbReference>
<dbReference type="RefSeq" id="NP_990812.2">
    <property type="nucleotide sequence ID" value="NM_205481.2"/>
</dbReference>
<dbReference type="SMR" id="Q05063"/>
<dbReference type="FunCoup" id="Q05063">
    <property type="interactions" value="130"/>
</dbReference>
<dbReference type="STRING" id="9031.ENSGALP00000067031"/>
<dbReference type="GlyCosmos" id="Q05063">
    <property type="glycosylation" value="1 site, No reported glycans"/>
</dbReference>
<dbReference type="GlyGen" id="Q05063">
    <property type="glycosylation" value="1 site"/>
</dbReference>
<dbReference type="PaxDb" id="9031-ENSGALP00000040869"/>
<dbReference type="KEGG" id="gga:396474"/>
<dbReference type="VEuPathDB" id="HostDB:geneid_396474"/>
<dbReference type="eggNOG" id="ENOG502QWQR">
    <property type="taxonomic scope" value="Eukaryota"/>
</dbReference>
<dbReference type="InParanoid" id="Q05063"/>
<dbReference type="OrthoDB" id="547291at2759"/>
<dbReference type="PhylomeDB" id="Q05063"/>
<dbReference type="Proteomes" id="UP000000539">
    <property type="component" value="Unassembled WGS sequence"/>
</dbReference>
<dbReference type="GO" id="GO:0062023">
    <property type="term" value="C:collagen-containing extracellular matrix"/>
    <property type="evidence" value="ECO:0000318"/>
    <property type="project" value="GO_Central"/>
</dbReference>
<dbReference type="GO" id="GO:0005615">
    <property type="term" value="C:extracellular space"/>
    <property type="evidence" value="ECO:0000250"/>
    <property type="project" value="UniProtKB"/>
</dbReference>
<dbReference type="GO" id="GO:0005518">
    <property type="term" value="F:collagen binding"/>
    <property type="evidence" value="ECO:0000250"/>
    <property type="project" value="UniProtKB"/>
</dbReference>
<dbReference type="GO" id="GO:0005507">
    <property type="term" value="F:copper ion binding"/>
    <property type="evidence" value="ECO:0007669"/>
    <property type="project" value="InterPro"/>
</dbReference>
<dbReference type="GO" id="GO:0004720">
    <property type="term" value="F:protein-lysine 6-oxidase activity"/>
    <property type="evidence" value="ECO:0000250"/>
    <property type="project" value="UniProtKB"/>
</dbReference>
<dbReference type="GO" id="GO:0030199">
    <property type="term" value="P:collagen fibril organization"/>
    <property type="evidence" value="ECO:0000318"/>
    <property type="project" value="GO_Central"/>
</dbReference>
<dbReference type="GO" id="GO:0018057">
    <property type="term" value="P:peptidyl-lysine oxidation"/>
    <property type="evidence" value="ECO:0000250"/>
    <property type="project" value="UniProtKB"/>
</dbReference>
<dbReference type="GO" id="GO:0035791">
    <property type="term" value="P:platelet-derived growth factor receptor-beta signaling pathway"/>
    <property type="evidence" value="ECO:0000318"/>
    <property type="project" value="GO_Central"/>
</dbReference>
<dbReference type="InterPro" id="IPR050912">
    <property type="entry name" value="LOX-like_protein"/>
</dbReference>
<dbReference type="InterPro" id="IPR001695">
    <property type="entry name" value="Lysyl_oxidase"/>
</dbReference>
<dbReference type="InterPro" id="IPR019828">
    <property type="entry name" value="Lysyl_oxidase_CS"/>
</dbReference>
<dbReference type="PANTHER" id="PTHR45817">
    <property type="entry name" value="LYSYL OXIDASE-LIKE-RELATED"/>
    <property type="match status" value="1"/>
</dbReference>
<dbReference type="PANTHER" id="PTHR45817:SF6">
    <property type="entry name" value="PROTEIN-LYSINE 6-OXIDASE"/>
    <property type="match status" value="1"/>
</dbReference>
<dbReference type="Pfam" id="PF01186">
    <property type="entry name" value="Lysyl_oxidase"/>
    <property type="match status" value="1"/>
</dbReference>
<dbReference type="PRINTS" id="PR00074">
    <property type="entry name" value="LYSYLOXIDASE"/>
</dbReference>
<dbReference type="PROSITE" id="PS00926">
    <property type="entry name" value="LYSYL_OXIDASE"/>
    <property type="match status" value="1"/>
</dbReference>
<feature type="signal peptide" evidence="5">
    <location>
        <begin position="1"/>
        <end position="27"/>
    </location>
</feature>
<feature type="propeptide" id="PRO_0000018526" description="Removed by BMP1" evidence="1">
    <location>
        <begin position="28"/>
        <end position="171"/>
    </location>
</feature>
<feature type="chain" id="PRO_0000018527" description="Protein-lysine 6-oxidase, long form" evidence="1">
    <location>
        <begin position="172"/>
        <end position="420"/>
    </location>
</feature>
<feature type="chain" id="PRO_0000447889" description="Protein-lysine 6-oxidase, short form" evidence="2">
    <location>
        <begin position="222"/>
        <end position="420"/>
    </location>
</feature>
<feature type="region of interest" description="Disordered" evidence="6">
    <location>
        <begin position="54"/>
        <end position="177"/>
    </location>
</feature>
<feature type="region of interest" description="Lysyl-oxidase like">
    <location>
        <begin position="216"/>
        <end position="420"/>
    </location>
</feature>
<feature type="compositionally biased region" description="Low complexity" evidence="6">
    <location>
        <begin position="82"/>
        <end position="92"/>
    </location>
</feature>
<feature type="compositionally biased region" description="Pro residues" evidence="6">
    <location>
        <begin position="93"/>
        <end position="105"/>
    </location>
</feature>
<feature type="compositionally biased region" description="Basic residues" evidence="6">
    <location>
        <begin position="107"/>
        <end position="119"/>
    </location>
</feature>
<feature type="compositionally biased region" description="Basic residues" evidence="6">
    <location>
        <begin position="134"/>
        <end position="147"/>
    </location>
</feature>
<feature type="binding site" evidence="5">
    <location>
        <position position="295"/>
    </location>
    <ligand>
        <name>Cu cation</name>
        <dbReference type="ChEBI" id="CHEBI:23378"/>
    </ligand>
</feature>
<feature type="binding site" evidence="5">
    <location>
        <position position="297"/>
    </location>
    <ligand>
        <name>Cu cation</name>
        <dbReference type="ChEBI" id="CHEBI:23378"/>
    </ligand>
</feature>
<feature type="binding site" evidence="5">
    <location>
        <position position="299"/>
    </location>
    <ligand>
        <name>Cu cation</name>
        <dbReference type="ChEBI" id="CHEBI:23378"/>
    </ligand>
</feature>
<feature type="site" description="Cleavage; by ADAMTS2 and ADAMTS14" evidence="2">
    <location>
        <begin position="221"/>
        <end position="222"/>
    </location>
</feature>
<feature type="modified residue" description="Sulfotyrosine" evidence="2">
    <location>
        <position position="190"/>
    </location>
</feature>
<feature type="modified residue" description="2',4',5'-topaquinone" evidence="4">
    <location>
        <position position="358"/>
    </location>
</feature>
<feature type="glycosylation site" description="N-linked (GlcNAc...) asparagine" evidence="5">
    <location>
        <position position="78"/>
    </location>
</feature>
<feature type="disulfide bond" evidence="4">
    <location>
        <begin position="241"/>
        <end position="247"/>
    </location>
</feature>
<feature type="disulfide bond" evidence="4">
    <location>
        <begin position="294"/>
        <end position="343"/>
    </location>
</feature>
<feature type="disulfide bond" evidence="4">
    <location>
        <begin position="327"/>
        <end position="333"/>
    </location>
</feature>
<feature type="disulfide bond" evidence="4">
    <location>
        <begin position="354"/>
        <end position="364"/>
    </location>
</feature>
<feature type="disulfide bond" evidence="4">
    <location>
        <begin position="401"/>
        <end position="415"/>
    </location>
</feature>
<feature type="cross-link" description="Lysine tyrosylquinone (Lys-Tyr)" evidence="4">
    <location>
        <begin position="323"/>
        <end position="358"/>
    </location>
</feature>
<comment type="function">
    <text>Responsible for the post-translational oxidative deamination of peptidyl lysine residues in precursors to fibrous collagen and elastin.</text>
</comment>
<comment type="function">
    <text>In addition to cross linking of extracellular matrix proteins, it may have a direct role in tumor suppression.</text>
</comment>
<comment type="catalytic activity">
    <reaction evidence="7">
        <text>L-lysyl-[protein] + O2 + H2O = (S)-2-amino-6-oxohexanoyl-[protein] + H2O2 + NH4(+)</text>
        <dbReference type="Rhea" id="RHEA:24544"/>
        <dbReference type="Rhea" id="RHEA-COMP:9752"/>
        <dbReference type="Rhea" id="RHEA-COMP:12448"/>
        <dbReference type="ChEBI" id="CHEBI:15377"/>
        <dbReference type="ChEBI" id="CHEBI:15379"/>
        <dbReference type="ChEBI" id="CHEBI:16240"/>
        <dbReference type="ChEBI" id="CHEBI:28938"/>
        <dbReference type="ChEBI" id="CHEBI:29969"/>
        <dbReference type="ChEBI" id="CHEBI:131803"/>
        <dbReference type="EC" id="1.4.3.13"/>
    </reaction>
</comment>
<comment type="cofactor">
    <cofactor evidence="1">
        <name>Cu cation</name>
        <dbReference type="ChEBI" id="CHEBI:23378"/>
    </cofactor>
</comment>
<comment type="cofactor">
    <cofactor evidence="4">
        <name>lysine tyrosylquinone residue</name>
        <dbReference type="ChEBI" id="CHEBI:20489"/>
    </cofactor>
    <text evidence="4">Contains 1 lysine tyrosylquinone.</text>
</comment>
<comment type="subcellular location">
    <subcellularLocation>
        <location>Secreted</location>
        <location>Extracellular space</location>
    </subcellularLocation>
</comment>
<comment type="developmental stage">
    <text>Increases between day 8 and 16 of embryonic development, during aortic embryogenesis, in direct proportion to total protein synthesis.</text>
</comment>
<comment type="PTM">
    <text evidence="4">The lysine tyrosylquinone cross-link (LTQ) is generated by condensation of the epsilon-amino group of a lysine with a topaquinone produced by oxidation of tyrosine.</text>
</comment>
<comment type="PTM">
    <text evidence="2 3">Proteolytically cleaved by BMP1 which removes the propeptide (By similarity). Also proteolytically cleaved by ADAMTS2 and ADAMTS14, but not by ADAMTS3, at an additional cleavage site downstream of the BMP1 cleavage site (By similarity). The propeptide plays a role in directing the deposition of this enzyme to elastic fibers, via interaction with tropoelastin (By similarity). Cleavage by BMP1 to remove the propeptide does not increase enzymatic activity but increases binding to collagen (By similarity). Cleavage by ADAMTS2 produces a form with reduced collagen-binding activity (By similarity).</text>
</comment>
<comment type="PTM">
    <text evidence="2">Sulfated at Tyr-190 and also at either Tyr-186 or Tyr-187 which enhances binding to collagen.</text>
</comment>
<comment type="similarity">
    <text evidence="8">Belongs to the lysyl oxidase family.</text>
</comment>
<accession>Q05063</accession>
<proteinExistence type="evidence at protein level"/>
<protein>
    <recommendedName>
        <fullName>Protein-lysine 6-oxidase</fullName>
        <ecNumber evidence="7">1.4.3.13</ecNumber>
    </recommendedName>
    <alternativeName>
        <fullName>Lysyl oxidase</fullName>
    </alternativeName>
    <component>
        <recommendedName>
            <fullName evidence="2">Protein-lysine 6-oxidase, long form</fullName>
        </recommendedName>
    </component>
    <component>
        <recommendedName>
            <fullName evidence="2">Protein-lysine 6-oxidase, short form</fullName>
        </recommendedName>
    </component>
</protein>
<name>LYOX_CHICK</name>
<gene>
    <name type="primary">LOX</name>
</gene>
<keyword id="KW-0186">Copper</keyword>
<keyword id="KW-1015">Disulfide bond</keyword>
<keyword id="KW-0325">Glycoprotein</keyword>
<keyword id="KW-0886">LTQ</keyword>
<keyword id="KW-0479">Metal-binding</keyword>
<keyword id="KW-0560">Oxidoreductase</keyword>
<keyword id="KW-1185">Reference proteome</keyword>
<keyword id="KW-0964">Secreted</keyword>
<keyword id="KW-0732">Signal</keyword>
<keyword id="KW-0765">Sulfation</keyword>
<keyword id="KW-0801">TPQ</keyword>
<organism>
    <name type="scientific">Gallus gallus</name>
    <name type="common">Chicken</name>
    <dbReference type="NCBI Taxonomy" id="9031"/>
    <lineage>
        <taxon>Eukaryota</taxon>
        <taxon>Metazoa</taxon>
        <taxon>Chordata</taxon>
        <taxon>Craniata</taxon>
        <taxon>Vertebrata</taxon>
        <taxon>Euteleostomi</taxon>
        <taxon>Archelosauria</taxon>
        <taxon>Archosauria</taxon>
        <taxon>Dinosauria</taxon>
        <taxon>Saurischia</taxon>
        <taxon>Theropoda</taxon>
        <taxon>Coelurosauria</taxon>
        <taxon>Aves</taxon>
        <taxon>Neognathae</taxon>
        <taxon>Galloanserae</taxon>
        <taxon>Galliformes</taxon>
        <taxon>Phasianidae</taxon>
        <taxon>Phasianinae</taxon>
        <taxon>Gallus</taxon>
    </lineage>
</organism>
<reference key="1">
    <citation type="journal article" date="1992" name="J. Biol. Chem.">
        <title>Characterization and developmental expression of chick aortic lysyl oxidase.</title>
        <authorList>
            <person name="Wu Y."/>
            <person name="Rich C.B."/>
            <person name="Lincecum J."/>
            <person name="Trackman P.C."/>
            <person name="Kagan H.M."/>
            <person name="Foster J.A."/>
        </authorList>
    </citation>
    <scope>NUCLEOTIDE SEQUENCE [MRNA]</scope>
    <scope>CATALYTIC ACTIVITY</scope>
    <source>
        <tissue>Embryo</tissue>
    </source>
</reference>
<sequence>MRCAPPGLLLAQLHACIFWSGLWPAGCQSPPAAWRQRIQWENNGQVYSLLSQGAQYQPPRRRQGAEPASSPVLLLRGNGSVPRAAAAAAARPQPEPQPQAQPQPRPRSSRRQPLGRRHWFQAGYRAPSGSARPAPRRRPRGRRSRRRERAERRRAAAPSGLRPGREDVMVGDDPYSPYKYTDDNPYYNYYDTYERPRQGSRYRPGYGTGYFQYGLPDLVPDPYYIQASTYVQRMSMYNLRCAAEENCLASSAYRADVRDYDNRVLLRFPQRVKNQGTSDFLPSRPRYSWEWHSCHQHYHSMDEFSHYDLLDASSHRKVAEGHKASFCLEDTSCDYGYYRRYACTAHTQGLSPGCYDTYNADIDCQWIDITDVKPGNYILKVSVNPSYLVPESDYSNNIVRCDIRYTGHHAYASGCTISPY</sequence>